<organism>
    <name type="scientific">Bordetella avium (strain 197N)</name>
    <dbReference type="NCBI Taxonomy" id="360910"/>
    <lineage>
        <taxon>Bacteria</taxon>
        <taxon>Pseudomonadati</taxon>
        <taxon>Pseudomonadota</taxon>
        <taxon>Betaproteobacteria</taxon>
        <taxon>Burkholderiales</taxon>
        <taxon>Alcaligenaceae</taxon>
        <taxon>Bordetella</taxon>
    </lineage>
</organism>
<evidence type="ECO:0000255" key="1">
    <source>
        <dbReference type="HAMAP-Rule" id="MF_00344"/>
    </source>
</evidence>
<reference key="1">
    <citation type="journal article" date="2006" name="J. Bacteriol.">
        <title>Comparison of the genome sequence of the poultry pathogen Bordetella avium with those of B. bronchiseptica, B. pertussis, and B. parapertussis reveals extensive diversity in surface structures associated with host interaction.</title>
        <authorList>
            <person name="Sebaihia M."/>
            <person name="Preston A."/>
            <person name="Maskell D.J."/>
            <person name="Kuzmiak H."/>
            <person name="Connell T.D."/>
            <person name="King N.D."/>
            <person name="Orndorff P.E."/>
            <person name="Miyamoto D.M."/>
            <person name="Thomson N.R."/>
            <person name="Harris D."/>
            <person name="Goble A."/>
            <person name="Lord A."/>
            <person name="Murphy L."/>
            <person name="Quail M.A."/>
            <person name="Rutter S."/>
            <person name="Squares R."/>
            <person name="Squares S."/>
            <person name="Woodward J."/>
            <person name="Parkhill J."/>
            <person name="Temple L.M."/>
        </authorList>
    </citation>
    <scope>NUCLEOTIDE SEQUENCE [LARGE SCALE GENOMIC DNA]</scope>
    <source>
        <strain>197N</strain>
    </source>
</reference>
<gene>
    <name evidence="1" type="primary">guaA</name>
    <name type="ordered locus">BAV1568</name>
</gene>
<accession>Q2L1U0</accession>
<comment type="function">
    <text evidence="1">Catalyzes the synthesis of GMP from XMP.</text>
</comment>
<comment type="catalytic activity">
    <reaction evidence="1">
        <text>XMP + L-glutamine + ATP + H2O = GMP + L-glutamate + AMP + diphosphate + 2 H(+)</text>
        <dbReference type="Rhea" id="RHEA:11680"/>
        <dbReference type="ChEBI" id="CHEBI:15377"/>
        <dbReference type="ChEBI" id="CHEBI:15378"/>
        <dbReference type="ChEBI" id="CHEBI:29985"/>
        <dbReference type="ChEBI" id="CHEBI:30616"/>
        <dbReference type="ChEBI" id="CHEBI:33019"/>
        <dbReference type="ChEBI" id="CHEBI:57464"/>
        <dbReference type="ChEBI" id="CHEBI:58115"/>
        <dbReference type="ChEBI" id="CHEBI:58359"/>
        <dbReference type="ChEBI" id="CHEBI:456215"/>
        <dbReference type="EC" id="6.3.5.2"/>
    </reaction>
</comment>
<comment type="pathway">
    <text evidence="1">Purine metabolism; GMP biosynthesis; GMP from XMP (L-Gln route): step 1/1.</text>
</comment>
<comment type="subunit">
    <text evidence="1">Homodimer.</text>
</comment>
<protein>
    <recommendedName>
        <fullName evidence="1">GMP synthase [glutamine-hydrolyzing]</fullName>
        <ecNumber evidence="1">6.3.5.2</ecNumber>
    </recommendedName>
    <alternativeName>
        <fullName evidence="1">GMP synthetase</fullName>
    </alternativeName>
    <alternativeName>
        <fullName evidence="1">Glutamine amidotransferase</fullName>
    </alternativeName>
</protein>
<dbReference type="EC" id="6.3.5.2" evidence="1"/>
<dbReference type="EMBL" id="AM167904">
    <property type="protein sequence ID" value="CAJ49180.1"/>
    <property type="molecule type" value="Genomic_DNA"/>
</dbReference>
<dbReference type="RefSeq" id="WP_012417243.1">
    <property type="nucleotide sequence ID" value="NC_010645.1"/>
</dbReference>
<dbReference type="SMR" id="Q2L1U0"/>
<dbReference type="STRING" id="360910.BAV1568"/>
<dbReference type="MEROPS" id="C26.962"/>
<dbReference type="GeneID" id="92935369"/>
<dbReference type="KEGG" id="bav:BAV1568"/>
<dbReference type="eggNOG" id="COG0518">
    <property type="taxonomic scope" value="Bacteria"/>
</dbReference>
<dbReference type="eggNOG" id="COG0519">
    <property type="taxonomic scope" value="Bacteria"/>
</dbReference>
<dbReference type="HOGENOM" id="CLU_014340_0_5_4"/>
<dbReference type="OrthoDB" id="9802219at2"/>
<dbReference type="UniPathway" id="UPA00189">
    <property type="reaction ID" value="UER00296"/>
</dbReference>
<dbReference type="Proteomes" id="UP000001977">
    <property type="component" value="Chromosome"/>
</dbReference>
<dbReference type="GO" id="GO:0005829">
    <property type="term" value="C:cytosol"/>
    <property type="evidence" value="ECO:0007669"/>
    <property type="project" value="TreeGrafter"/>
</dbReference>
<dbReference type="GO" id="GO:0005524">
    <property type="term" value="F:ATP binding"/>
    <property type="evidence" value="ECO:0007669"/>
    <property type="project" value="UniProtKB-UniRule"/>
</dbReference>
<dbReference type="GO" id="GO:0003921">
    <property type="term" value="F:GMP synthase activity"/>
    <property type="evidence" value="ECO:0007669"/>
    <property type="project" value="InterPro"/>
</dbReference>
<dbReference type="CDD" id="cd01742">
    <property type="entry name" value="GATase1_GMP_Synthase"/>
    <property type="match status" value="1"/>
</dbReference>
<dbReference type="CDD" id="cd01997">
    <property type="entry name" value="GMP_synthase_C"/>
    <property type="match status" value="1"/>
</dbReference>
<dbReference type="FunFam" id="3.30.300.10:FF:000002">
    <property type="entry name" value="GMP synthase [glutamine-hydrolyzing]"/>
    <property type="match status" value="1"/>
</dbReference>
<dbReference type="FunFam" id="3.40.50.620:FF:000001">
    <property type="entry name" value="GMP synthase [glutamine-hydrolyzing]"/>
    <property type="match status" value="1"/>
</dbReference>
<dbReference type="FunFam" id="3.40.50.880:FF:000001">
    <property type="entry name" value="GMP synthase [glutamine-hydrolyzing]"/>
    <property type="match status" value="1"/>
</dbReference>
<dbReference type="Gene3D" id="3.30.300.10">
    <property type="match status" value="1"/>
</dbReference>
<dbReference type="Gene3D" id="3.40.50.880">
    <property type="match status" value="1"/>
</dbReference>
<dbReference type="Gene3D" id="3.40.50.620">
    <property type="entry name" value="HUPs"/>
    <property type="match status" value="1"/>
</dbReference>
<dbReference type="HAMAP" id="MF_00344">
    <property type="entry name" value="GMP_synthase"/>
    <property type="match status" value="1"/>
</dbReference>
<dbReference type="InterPro" id="IPR029062">
    <property type="entry name" value="Class_I_gatase-like"/>
</dbReference>
<dbReference type="InterPro" id="IPR017926">
    <property type="entry name" value="GATASE"/>
</dbReference>
<dbReference type="InterPro" id="IPR001674">
    <property type="entry name" value="GMP_synth_C"/>
</dbReference>
<dbReference type="InterPro" id="IPR004739">
    <property type="entry name" value="GMP_synth_GATase"/>
</dbReference>
<dbReference type="InterPro" id="IPR022955">
    <property type="entry name" value="GMP_synthase"/>
</dbReference>
<dbReference type="InterPro" id="IPR025777">
    <property type="entry name" value="GMPS_ATP_PPase_dom"/>
</dbReference>
<dbReference type="InterPro" id="IPR022310">
    <property type="entry name" value="NAD/GMP_synthase"/>
</dbReference>
<dbReference type="InterPro" id="IPR014729">
    <property type="entry name" value="Rossmann-like_a/b/a_fold"/>
</dbReference>
<dbReference type="NCBIfam" id="TIGR00884">
    <property type="entry name" value="guaA_Cterm"/>
    <property type="match status" value="1"/>
</dbReference>
<dbReference type="NCBIfam" id="TIGR00888">
    <property type="entry name" value="guaA_Nterm"/>
    <property type="match status" value="1"/>
</dbReference>
<dbReference type="NCBIfam" id="NF000848">
    <property type="entry name" value="PRK00074.1"/>
    <property type="match status" value="1"/>
</dbReference>
<dbReference type="PANTHER" id="PTHR11922:SF2">
    <property type="entry name" value="GMP SYNTHASE [GLUTAMINE-HYDROLYZING]"/>
    <property type="match status" value="1"/>
</dbReference>
<dbReference type="PANTHER" id="PTHR11922">
    <property type="entry name" value="GMP SYNTHASE-RELATED"/>
    <property type="match status" value="1"/>
</dbReference>
<dbReference type="Pfam" id="PF00117">
    <property type="entry name" value="GATase"/>
    <property type="match status" value="1"/>
</dbReference>
<dbReference type="Pfam" id="PF00958">
    <property type="entry name" value="GMP_synt_C"/>
    <property type="match status" value="1"/>
</dbReference>
<dbReference type="Pfam" id="PF02540">
    <property type="entry name" value="NAD_synthase"/>
    <property type="match status" value="1"/>
</dbReference>
<dbReference type="SUPFAM" id="SSF52402">
    <property type="entry name" value="Adenine nucleotide alpha hydrolases-like"/>
    <property type="match status" value="1"/>
</dbReference>
<dbReference type="SUPFAM" id="SSF52317">
    <property type="entry name" value="Class I glutamine amidotransferase-like"/>
    <property type="match status" value="1"/>
</dbReference>
<dbReference type="SUPFAM" id="SSF54810">
    <property type="entry name" value="GMP synthetase C-terminal dimerisation domain"/>
    <property type="match status" value="1"/>
</dbReference>
<dbReference type="PROSITE" id="PS51273">
    <property type="entry name" value="GATASE_TYPE_1"/>
    <property type="match status" value="1"/>
</dbReference>
<dbReference type="PROSITE" id="PS51553">
    <property type="entry name" value="GMPS_ATP_PPASE"/>
    <property type="match status" value="1"/>
</dbReference>
<sequence length="530" mass="57857">MHQRILILDYGSQVTQLIARRVREAGVYSEIHPGDVDDAFIREQAAQGLKGVILSGSHASAYEEGSMRVPAAVFELGLPVLGICYGMQAMALQLGGKVSFSDHREFGYAEIVAQGGTKLLSGLADFQNDAGQDVLKVWMSHGDKVTELPPGFSLMASTPSCPIAAMADESRGYYAVQFHPEVTHTVQGKALFSRFVREICGCEGDWNMPDYISEAVARIREQVGNDEVILGLSGGVDSSVAAALIHRAIGDQLTCVFVDHGLLRLNEGLQVMQTFSENMGVKIIHVDATEQFMGKLAGVADPEAKRKIIGREFVEVFQTEAGKLQGAKWLAQGTIYPDVIESAGAKTGKAAAIKSHHNVGGLPETLNLQLLEPLRELFKDEVRELGVALGLPPQMVYRHPFPGPGLGVRILGEVKHEYAELLRRADAIFIEELRNTKDPASDLSWYDLTSQAFAVFLPVKSVGVMGDGRTYEYVVALRAVQTFDFMTADWAPLPHPLLAKVSSRIINEVRGINRVVYDVSSKPPATIEWE</sequence>
<keyword id="KW-0067">ATP-binding</keyword>
<keyword id="KW-0315">Glutamine amidotransferase</keyword>
<keyword id="KW-0332">GMP biosynthesis</keyword>
<keyword id="KW-0436">Ligase</keyword>
<keyword id="KW-0547">Nucleotide-binding</keyword>
<keyword id="KW-0658">Purine biosynthesis</keyword>
<keyword id="KW-1185">Reference proteome</keyword>
<name>GUAA_BORA1</name>
<proteinExistence type="inferred from homology"/>
<feature type="chain" id="PRO_1000120222" description="GMP synthase [glutamine-hydrolyzing]">
    <location>
        <begin position="1"/>
        <end position="530"/>
    </location>
</feature>
<feature type="domain" description="Glutamine amidotransferase type-1" evidence="1">
    <location>
        <begin position="4"/>
        <end position="205"/>
    </location>
</feature>
<feature type="domain" description="GMPS ATP-PPase" evidence="1">
    <location>
        <begin position="206"/>
        <end position="398"/>
    </location>
</feature>
<feature type="active site" description="Nucleophile" evidence="1">
    <location>
        <position position="84"/>
    </location>
</feature>
<feature type="active site" evidence="1">
    <location>
        <position position="179"/>
    </location>
</feature>
<feature type="active site" evidence="1">
    <location>
        <position position="181"/>
    </location>
</feature>
<feature type="binding site" evidence="1">
    <location>
        <begin position="233"/>
        <end position="239"/>
    </location>
    <ligand>
        <name>ATP</name>
        <dbReference type="ChEBI" id="CHEBI:30616"/>
    </ligand>
</feature>